<feature type="chain" id="PRO_0000454810" description="Protein CADMIUM TOLERANCE 1">
    <location>
        <begin position="1"/>
        <end position="55"/>
    </location>
</feature>
<feature type="transmembrane region" description="Helical" evidence="1">
    <location>
        <begin position="24"/>
        <end position="40"/>
    </location>
</feature>
<keyword id="KW-1003">Cell membrane</keyword>
<keyword id="KW-0134">Cell wall</keyword>
<keyword id="KW-0472">Membrane</keyword>
<keyword id="KW-0479">Metal-binding</keyword>
<keyword id="KW-0964">Secreted</keyword>
<keyword id="KW-0346">Stress response</keyword>
<keyword id="KW-0812">Transmembrane</keyword>
<keyword id="KW-1133">Transmembrane helix</keyword>
<protein>
    <recommendedName>
        <fullName evidence="4">Protein CADMIUM TOLERANCE 1</fullName>
        <shortName evidence="4">Cd tolerant 1</shortName>
        <shortName evidence="4">DcCDT1</shortName>
    </recommendedName>
</protein>
<dbReference type="EMBL" id="AB333802">
    <property type="protein sequence ID" value="BAF99028.1"/>
    <property type="molecule type" value="mRNA"/>
</dbReference>
<dbReference type="GO" id="GO:0005576">
    <property type="term" value="C:extracellular region"/>
    <property type="evidence" value="ECO:0007669"/>
    <property type="project" value="UniProtKB-KW"/>
</dbReference>
<dbReference type="GO" id="GO:0005886">
    <property type="term" value="C:plasma membrane"/>
    <property type="evidence" value="ECO:0007669"/>
    <property type="project" value="UniProtKB-SubCell"/>
</dbReference>
<dbReference type="GO" id="GO:0046872">
    <property type="term" value="F:metal ion binding"/>
    <property type="evidence" value="ECO:0000250"/>
    <property type="project" value="UniProtKB"/>
</dbReference>
<dbReference type="GO" id="GO:0140487">
    <property type="term" value="F:metal ion sequestering activity"/>
    <property type="evidence" value="ECO:0000250"/>
    <property type="project" value="UniProtKB"/>
</dbReference>
<dbReference type="GO" id="GO:1990748">
    <property type="term" value="P:cellular detoxification"/>
    <property type="evidence" value="ECO:0000250"/>
    <property type="project" value="UniProtKB"/>
</dbReference>
<dbReference type="GO" id="GO:0010038">
    <property type="term" value="P:response to metal ion"/>
    <property type="evidence" value="ECO:0007669"/>
    <property type="project" value="UniProtKB-ARBA"/>
</dbReference>
<dbReference type="InterPro" id="IPR051671">
    <property type="entry name" value="CYSTM1_HM_Tolerance"/>
</dbReference>
<dbReference type="InterPro" id="IPR028144">
    <property type="entry name" value="CYSTM_dom"/>
</dbReference>
<dbReference type="PANTHER" id="PTHR35470">
    <property type="entry name" value="CADMIUM TOLERANT 3"/>
    <property type="match status" value="1"/>
</dbReference>
<dbReference type="PANTHER" id="PTHR35470:SF12">
    <property type="entry name" value="PROTEIN CADMIUM TOLERANCE 1"/>
    <property type="match status" value="1"/>
</dbReference>
<dbReference type="Pfam" id="PF12734">
    <property type="entry name" value="CYSTM"/>
    <property type="match status" value="1"/>
</dbReference>
<reference key="1">
    <citation type="journal article" date="2009" name="Plant Cell Physiol.">
        <title>Novel cysteine-rich peptides from Digitaria ciliaris and Oryza sativa enhance tolerance to cadmium by limiting its cellular accumulation.</title>
        <authorList>
            <person name="Kuramata M."/>
            <person name="Masuya S."/>
            <person name="Takahashi Y."/>
            <person name="Kitagawa E."/>
            <person name="Inoue C."/>
            <person name="Ishikawa S."/>
            <person name="Youssefian S."/>
            <person name="Kusano T."/>
        </authorList>
    </citation>
    <scope>NUCLEOTIDE SEQUENCE [MRNA]</scope>
    <scope>FUNCTION</scope>
    <scope>SUBCELLULAR LOCATION</scope>
    <scope>GENE FAMILY</scope>
    <scope>NOMENCLATURE</scope>
    <source>
        <tissue>Root</tissue>
    </source>
</reference>
<reference key="2">
    <citation type="journal article" date="2009" name="Plant Signal. Behav.">
        <title>A novel plant cysteine-rich peptide family conferring cadmium tolerance to yeast and plants.</title>
        <authorList>
            <person name="Matsuda T."/>
            <person name="Kuramata M."/>
            <person name="Takahashi Y."/>
            <person name="Kitagawa E."/>
            <person name="Youssefian S."/>
            <person name="Kusano T."/>
        </authorList>
    </citation>
    <scope>FUNCTION</scope>
    <scope>GENE FAMILY</scope>
</reference>
<proteinExistence type="inferred from homology"/>
<sequence length="55" mass="6401">MYNAPPPQDMSYYEHCQKRHEEKGCLYACIFTALCCFCCYETCECCLDCLCCCCN</sequence>
<accession>A9ZPI1</accession>
<organism>
    <name type="scientific">Digitaria ciliaris</name>
    <name type="common">Southern crabgrass</name>
    <name type="synonym">Panicum ciliare</name>
    <dbReference type="NCBI Taxonomy" id="66018"/>
    <lineage>
        <taxon>Eukaryota</taxon>
        <taxon>Viridiplantae</taxon>
        <taxon>Streptophyta</taxon>
        <taxon>Embryophyta</taxon>
        <taxon>Tracheophyta</taxon>
        <taxon>Spermatophyta</taxon>
        <taxon>Magnoliopsida</taxon>
        <taxon>Liliopsida</taxon>
        <taxon>Poales</taxon>
        <taxon>Poaceae</taxon>
        <taxon>PACMAD clade</taxon>
        <taxon>Panicoideae</taxon>
        <taxon>Panicodae</taxon>
        <taxon>Paniceae</taxon>
        <taxon>Anthephorinae</taxon>
        <taxon>Digitaria</taxon>
    </lineage>
</organism>
<gene>
    <name evidence="4" type="primary">CDT1</name>
</gene>
<evidence type="ECO:0000255" key="1"/>
<evidence type="ECO:0000269" key="2">
    <source>
    </source>
</evidence>
<evidence type="ECO:0000269" key="3">
    <source>
    </source>
</evidence>
<evidence type="ECO:0000303" key="4">
    <source>
    </source>
</evidence>
<evidence type="ECO:0000305" key="5"/>
<comment type="function">
    <text evidence="2 3">Confers resistance to heavy metal ions (e.g. cadmium (CdCl(2)) and copper (CuCl(2))) by chelating them at the plasma membrane of root cells, thus stopping their entry and reducing their accumulation.</text>
</comment>
<comment type="subcellular location">
    <subcellularLocation>
        <location evidence="2">Cell membrane</location>
        <topology evidence="1">Single-pass membrane protein</topology>
    </subcellularLocation>
    <subcellularLocation>
        <location evidence="2">Secreted</location>
        <location evidence="2">Cell wall</location>
    </subcellularLocation>
</comment>
<comment type="similarity">
    <text evidence="5">Belongs to the CYSTM1 family.</text>
</comment>
<name>CDT1_DIGCI</name>